<proteinExistence type="inferred from homology"/>
<protein>
    <recommendedName>
        <fullName evidence="1">Probable tRNA pseudouridine synthase D</fullName>
        <ecNumber evidence="1">5.4.99.27</ecNumber>
    </recommendedName>
    <alternativeName>
        <fullName evidence="1">tRNA pseudouridine(13) synthase</fullName>
    </alternativeName>
    <alternativeName>
        <fullName evidence="1">tRNA pseudouridylate synthase D</fullName>
    </alternativeName>
    <alternativeName>
        <fullName evidence="1">tRNA-uridine isomerase D</fullName>
    </alternativeName>
</protein>
<feature type="chain" id="PRO_1000084750" description="Probable tRNA pseudouridine synthase D">
    <location>
        <begin position="1"/>
        <end position="439"/>
    </location>
</feature>
<feature type="domain" description="TRUD" evidence="1">
    <location>
        <begin position="166"/>
        <end position="391"/>
    </location>
</feature>
<feature type="active site" description="Nucleophile" evidence="1">
    <location>
        <position position="87"/>
    </location>
</feature>
<sequence length="439" mass="49945">MNNVPNVEKQIGIDLYTTKTPGIGGKLRQQTEDFGVIEITNREEGTEGKYLILELTKRNWETHHLIRDLTRILRISQKRVGFAGTKDKRAVTTQKISIYDMEEEALQNVHLKDTELKILGRSNKSLELGDLTGNEFIITVRDIDLDEKELESRLSQTTASIKEQGGVPNFFGIQRFGALRPITHVVGESIVRNDIEKAAMAYIAASYPDEPEDTQEVRNRVFETKDYIEGLKGYPLQLRYERAMMHHLVSKPEDYAGSFETLPANIRKMFVHAYQSYIYNTIICSRIKKGLPLNRAVVGDIVCFKNKAGLPDKSRNERVTEDNIDGMNNLVKRNRAFVTAPLVGYSSELASGVPGEIEREVIEELNVPIEGFKVPSMEELSSKGLRREILLSTDPKYFIEEDELNEGKYRVTLDFSLPKGSYATTILREYMKVEPLKMS</sequence>
<reference key="1">
    <citation type="journal article" date="2009" name="ISME J.">
        <title>The genome sequence of the psychrophilic archaeon, Methanococcoides burtonii: the role of genome evolution in cold adaptation.</title>
        <authorList>
            <person name="Allen M.A."/>
            <person name="Lauro F.M."/>
            <person name="Williams T.J."/>
            <person name="Burg D."/>
            <person name="Siddiqui K.S."/>
            <person name="De Francisci D."/>
            <person name="Chong K.W."/>
            <person name="Pilak O."/>
            <person name="Chew H.H."/>
            <person name="De Maere M.Z."/>
            <person name="Ting L."/>
            <person name="Katrib M."/>
            <person name="Ng C."/>
            <person name="Sowers K.R."/>
            <person name="Galperin M.Y."/>
            <person name="Anderson I.J."/>
            <person name="Ivanova N."/>
            <person name="Dalin E."/>
            <person name="Martinez M."/>
            <person name="Lapidus A."/>
            <person name="Hauser L."/>
            <person name="Land M."/>
            <person name="Thomas T."/>
            <person name="Cavicchioli R."/>
        </authorList>
    </citation>
    <scope>NUCLEOTIDE SEQUENCE [LARGE SCALE GENOMIC DNA]</scope>
    <source>
        <strain>DSM 6242 / NBRC 107633 / OCM 468 / ACE-M</strain>
    </source>
</reference>
<name>TRUD_METBU</name>
<comment type="function">
    <text evidence="1">Could be responsible for synthesis of pseudouridine from uracil-13 in transfer RNAs.</text>
</comment>
<comment type="catalytic activity">
    <reaction evidence="1">
        <text>uridine(13) in tRNA = pseudouridine(13) in tRNA</text>
        <dbReference type="Rhea" id="RHEA:42540"/>
        <dbReference type="Rhea" id="RHEA-COMP:10105"/>
        <dbReference type="Rhea" id="RHEA-COMP:10106"/>
        <dbReference type="ChEBI" id="CHEBI:65314"/>
        <dbReference type="ChEBI" id="CHEBI:65315"/>
        <dbReference type="EC" id="5.4.99.27"/>
    </reaction>
</comment>
<comment type="similarity">
    <text evidence="1">Belongs to the pseudouridine synthase TruD family.</text>
</comment>
<evidence type="ECO:0000255" key="1">
    <source>
        <dbReference type="HAMAP-Rule" id="MF_01082"/>
    </source>
</evidence>
<dbReference type="EC" id="5.4.99.27" evidence="1"/>
<dbReference type="EMBL" id="CP000300">
    <property type="protein sequence ID" value="ABE52200.1"/>
    <property type="molecule type" value="Genomic_DNA"/>
</dbReference>
<dbReference type="RefSeq" id="WP_011499345.1">
    <property type="nucleotide sequence ID" value="NC_007955.1"/>
</dbReference>
<dbReference type="SMR" id="Q12WH6"/>
<dbReference type="STRING" id="259564.Mbur_1281"/>
<dbReference type="GeneID" id="3998305"/>
<dbReference type="KEGG" id="mbu:Mbur_1281"/>
<dbReference type="HOGENOM" id="CLU_005281_4_1_2"/>
<dbReference type="OrthoDB" id="1798at2157"/>
<dbReference type="Proteomes" id="UP000001979">
    <property type="component" value="Chromosome"/>
</dbReference>
<dbReference type="GO" id="GO:0003723">
    <property type="term" value="F:RNA binding"/>
    <property type="evidence" value="ECO:0007669"/>
    <property type="project" value="InterPro"/>
</dbReference>
<dbReference type="GO" id="GO:0160150">
    <property type="term" value="F:tRNA pseudouridine(13) synthase activity"/>
    <property type="evidence" value="ECO:0007669"/>
    <property type="project" value="UniProtKB-EC"/>
</dbReference>
<dbReference type="GO" id="GO:0031119">
    <property type="term" value="P:tRNA pseudouridine synthesis"/>
    <property type="evidence" value="ECO:0007669"/>
    <property type="project" value="UniProtKB-UniRule"/>
</dbReference>
<dbReference type="CDD" id="cd02577">
    <property type="entry name" value="PSTD1"/>
    <property type="match status" value="1"/>
</dbReference>
<dbReference type="FunFam" id="3.30.2350.20:FF:000023">
    <property type="entry name" value="Probable tRNA pseudouridine synthase D"/>
    <property type="match status" value="1"/>
</dbReference>
<dbReference type="FunFam" id="3.30.70.3160:FF:000001">
    <property type="entry name" value="Probable tRNA pseudouridine synthase D"/>
    <property type="match status" value="1"/>
</dbReference>
<dbReference type="Gene3D" id="1.10.1510.30">
    <property type="match status" value="1"/>
</dbReference>
<dbReference type="Gene3D" id="3.30.70.3160">
    <property type="match status" value="1"/>
</dbReference>
<dbReference type="Gene3D" id="3.30.2350.20">
    <property type="entry name" value="TruD, catalytic domain"/>
    <property type="match status" value="1"/>
</dbReference>
<dbReference type="HAMAP" id="MF_01082">
    <property type="entry name" value="TruD"/>
    <property type="match status" value="1"/>
</dbReference>
<dbReference type="InterPro" id="IPR020103">
    <property type="entry name" value="PsdUridine_synth_cat_dom_sf"/>
</dbReference>
<dbReference type="InterPro" id="IPR001656">
    <property type="entry name" value="PsdUridine_synth_TruD"/>
</dbReference>
<dbReference type="InterPro" id="IPR020119">
    <property type="entry name" value="PsdUridine_synth_TruD_CS"/>
</dbReference>
<dbReference type="InterPro" id="IPR011760">
    <property type="entry name" value="PsdUridine_synth_TruD_insert"/>
</dbReference>
<dbReference type="InterPro" id="IPR042214">
    <property type="entry name" value="TruD_catalytic"/>
</dbReference>
<dbReference type="NCBIfam" id="TIGR00094">
    <property type="entry name" value="tRNA_TruD_broad"/>
    <property type="match status" value="1"/>
</dbReference>
<dbReference type="PANTHER" id="PTHR13326:SF21">
    <property type="entry name" value="PSEUDOURIDYLATE SYNTHASE PUS7L"/>
    <property type="match status" value="1"/>
</dbReference>
<dbReference type="PANTHER" id="PTHR13326">
    <property type="entry name" value="TRNA PSEUDOURIDINE SYNTHASE D"/>
    <property type="match status" value="1"/>
</dbReference>
<dbReference type="Pfam" id="PF01142">
    <property type="entry name" value="TruD"/>
    <property type="match status" value="1"/>
</dbReference>
<dbReference type="PIRSF" id="PIRSF037016">
    <property type="entry name" value="Pseudouridin_synth_euk_prd"/>
    <property type="match status" value="1"/>
</dbReference>
<dbReference type="SUPFAM" id="SSF55120">
    <property type="entry name" value="Pseudouridine synthase"/>
    <property type="match status" value="1"/>
</dbReference>
<dbReference type="PROSITE" id="PS50984">
    <property type="entry name" value="TRUD"/>
    <property type="match status" value="1"/>
</dbReference>
<dbReference type="PROSITE" id="PS01268">
    <property type="entry name" value="UPF0024"/>
    <property type="match status" value="1"/>
</dbReference>
<organism>
    <name type="scientific">Methanococcoides burtonii (strain DSM 6242 / NBRC 107633 / OCM 468 / ACE-M)</name>
    <dbReference type="NCBI Taxonomy" id="259564"/>
    <lineage>
        <taxon>Archaea</taxon>
        <taxon>Methanobacteriati</taxon>
        <taxon>Methanobacteriota</taxon>
        <taxon>Stenosarchaea group</taxon>
        <taxon>Methanomicrobia</taxon>
        <taxon>Methanosarcinales</taxon>
        <taxon>Methanosarcinaceae</taxon>
        <taxon>Methanococcoides</taxon>
    </lineage>
</organism>
<accession>Q12WH6</accession>
<gene>
    <name evidence="1" type="primary">truD</name>
    <name type="ordered locus">Mbur_1281</name>
</gene>
<keyword id="KW-0413">Isomerase</keyword>
<keyword id="KW-0819">tRNA processing</keyword>